<keyword id="KW-1015">Disulfide bond</keyword>
<keyword id="KW-1185">Reference proteome</keyword>
<keyword id="KW-0732">Signal</keyword>
<gene>
    <name type="primary">ESFL4</name>
    <name type="ordered locus">At2g41415</name>
    <name type="ORF">F13H10</name>
</gene>
<sequence>MKSSHAYLVCILLLSLFSLHQCVRLERSNKIDMSVCVHEICGGVFDGGCYCCPKTPALCWADIQFCTTYCQSQT</sequence>
<proteinExistence type="evidence at transcript level"/>
<dbReference type="EMBL" id="DQ487518">
    <property type="protein sequence ID" value="ABF59215.1"/>
    <property type="molecule type" value="mRNA"/>
</dbReference>
<dbReference type="EMBL" id="AC005662">
    <property type="status" value="NOT_ANNOTATED_CDS"/>
    <property type="molecule type" value="Genomic_DNA"/>
</dbReference>
<dbReference type="EMBL" id="CP002685">
    <property type="protein sequence ID" value="AEC09971.1"/>
    <property type="molecule type" value="Genomic_DNA"/>
</dbReference>
<dbReference type="EMBL" id="DQ652665">
    <property type="protein sequence ID" value="ABK28332.1"/>
    <property type="status" value="ALT_SEQ"/>
    <property type="molecule type" value="mRNA"/>
</dbReference>
<dbReference type="RefSeq" id="NP_001078036.1">
    <property type="nucleotide sequence ID" value="NM_001084567.2"/>
</dbReference>
<dbReference type="STRING" id="3702.Q1G3R6"/>
<dbReference type="PaxDb" id="3702-AT2G41415.1"/>
<dbReference type="ProteomicsDB" id="220584"/>
<dbReference type="EnsemblPlants" id="AT2G41415.1">
    <property type="protein sequence ID" value="AT2G41415.1"/>
    <property type="gene ID" value="AT2G41415"/>
</dbReference>
<dbReference type="GeneID" id="5007952"/>
<dbReference type="Gramene" id="AT2G41415.1">
    <property type="protein sequence ID" value="AT2G41415.1"/>
    <property type="gene ID" value="AT2G41415"/>
</dbReference>
<dbReference type="KEGG" id="ath:AT2G41415"/>
<dbReference type="Araport" id="AT2G41415"/>
<dbReference type="TAIR" id="AT2G41415"/>
<dbReference type="HOGENOM" id="CLU_183999_1_0_1"/>
<dbReference type="InParanoid" id="Q1G3R6"/>
<dbReference type="OMA" id="KIDMSVC"/>
<dbReference type="PhylomeDB" id="Q1G3R6"/>
<dbReference type="PRO" id="PR:Q1G3R6"/>
<dbReference type="Proteomes" id="UP000006548">
    <property type="component" value="Chromosome 2"/>
</dbReference>
<dbReference type="ExpressionAtlas" id="Q1G3R6">
    <property type="expression patterns" value="baseline and differential"/>
</dbReference>
<dbReference type="GO" id="GO:0010098">
    <property type="term" value="P:suspensor development"/>
    <property type="evidence" value="ECO:0007669"/>
    <property type="project" value="InterPro"/>
</dbReference>
<dbReference type="InterPro" id="IPR041608">
    <property type="entry name" value="ESF1_brassicaceae"/>
</dbReference>
<dbReference type="Pfam" id="PF18209">
    <property type="entry name" value="ESF1"/>
    <property type="match status" value="1"/>
</dbReference>
<protein>
    <recommendedName>
        <fullName>EMBRYO SURROUNDING FACTOR 1-like protein 4</fullName>
    </recommendedName>
</protein>
<organism>
    <name type="scientific">Arabidopsis thaliana</name>
    <name type="common">Mouse-ear cress</name>
    <dbReference type="NCBI Taxonomy" id="3702"/>
    <lineage>
        <taxon>Eukaryota</taxon>
        <taxon>Viridiplantae</taxon>
        <taxon>Streptophyta</taxon>
        <taxon>Embryophyta</taxon>
        <taxon>Tracheophyta</taxon>
        <taxon>Spermatophyta</taxon>
        <taxon>Magnoliopsida</taxon>
        <taxon>eudicotyledons</taxon>
        <taxon>Gunneridae</taxon>
        <taxon>Pentapetalae</taxon>
        <taxon>rosids</taxon>
        <taxon>malvids</taxon>
        <taxon>Brassicales</taxon>
        <taxon>Brassicaceae</taxon>
        <taxon>Camelineae</taxon>
        <taxon>Arabidopsis</taxon>
    </lineage>
</organism>
<evidence type="ECO:0000250" key="1"/>
<evidence type="ECO:0000255" key="2"/>
<evidence type="ECO:0000269" key="3">
    <source>
    </source>
</evidence>
<evidence type="ECO:0000305" key="4"/>
<name>ESFL4_ARATH</name>
<comment type="tissue specificity">
    <text evidence="3">expressed in flowers.</text>
</comment>
<comment type="similarity">
    <text evidence="4">Belongs to the MEG family.</text>
</comment>
<comment type="sequence caution" evidence="4">
    <conflict type="erroneous termination">
        <sequence resource="EMBL-CDS" id="ABK28332"/>
    </conflict>
    <text>Extended C-terminus.</text>
</comment>
<accession>Q1G3R6</accession>
<accession>A0MDP9</accession>
<reference key="1">
    <citation type="submission" date="2006-04" db="EMBL/GenBank/DDBJ databases">
        <title>Small cysteine-rich peptides resembling antimicrobial peptides have been under-predicted in plants.</title>
        <authorList>
            <person name="Silverstein K.A.T."/>
            <person name="Moskal W.A."/>
            <person name="Wu H.C."/>
            <person name="Underwood B.A."/>
            <person name="Graham M.A."/>
            <person name="Town C.D."/>
            <person name="VandenBosch K.A."/>
        </authorList>
    </citation>
    <scope>NUCLEOTIDE SEQUENCE [MRNA]</scope>
</reference>
<reference key="2">
    <citation type="journal article" date="1999" name="Nature">
        <title>Sequence and analysis of chromosome 2 of the plant Arabidopsis thaliana.</title>
        <authorList>
            <person name="Lin X."/>
            <person name="Kaul S."/>
            <person name="Rounsley S.D."/>
            <person name="Shea T.P."/>
            <person name="Benito M.-I."/>
            <person name="Town C.D."/>
            <person name="Fujii C.Y."/>
            <person name="Mason T.M."/>
            <person name="Bowman C.L."/>
            <person name="Barnstead M.E."/>
            <person name="Feldblyum T.V."/>
            <person name="Buell C.R."/>
            <person name="Ketchum K.A."/>
            <person name="Lee J.J."/>
            <person name="Ronning C.M."/>
            <person name="Koo H.L."/>
            <person name="Moffat K.S."/>
            <person name="Cronin L.A."/>
            <person name="Shen M."/>
            <person name="Pai G."/>
            <person name="Van Aken S."/>
            <person name="Umayam L."/>
            <person name="Tallon L.J."/>
            <person name="Gill J.E."/>
            <person name="Adams M.D."/>
            <person name="Carrera A.J."/>
            <person name="Creasy T.H."/>
            <person name="Goodman H.M."/>
            <person name="Somerville C.R."/>
            <person name="Copenhaver G.P."/>
            <person name="Preuss D."/>
            <person name="Nierman W.C."/>
            <person name="White O."/>
            <person name="Eisen J.A."/>
            <person name="Salzberg S.L."/>
            <person name="Fraser C.M."/>
            <person name="Venter J.C."/>
        </authorList>
    </citation>
    <scope>NUCLEOTIDE SEQUENCE [LARGE SCALE GENOMIC DNA]</scope>
    <source>
        <strain>cv. Columbia</strain>
    </source>
</reference>
<reference key="3">
    <citation type="journal article" date="2017" name="Plant J.">
        <title>Araport11: a complete reannotation of the Arabidopsis thaliana reference genome.</title>
        <authorList>
            <person name="Cheng C.Y."/>
            <person name="Krishnakumar V."/>
            <person name="Chan A.P."/>
            <person name="Thibaud-Nissen F."/>
            <person name="Schobel S."/>
            <person name="Town C.D."/>
        </authorList>
    </citation>
    <scope>GENOME REANNOTATION</scope>
    <source>
        <strain>cv. Columbia</strain>
    </source>
</reference>
<reference key="4">
    <citation type="journal article" date="2006" name="Plant Biotechnol. J.">
        <title>Simultaneous high-throughput recombinational cloning of open reading frames in closed and open configurations.</title>
        <authorList>
            <person name="Underwood B.A."/>
            <person name="Vanderhaeghen R."/>
            <person name="Whitford R."/>
            <person name="Town C.D."/>
            <person name="Hilson P."/>
        </authorList>
    </citation>
    <scope>NUCLEOTIDE SEQUENCE [LARGE SCALE MRNA]</scope>
    <source>
        <strain>cv. Columbia</strain>
    </source>
</reference>
<reference key="5">
    <citation type="journal article" date="2014" name="Science">
        <title>Central cell-derived peptides regulate early embryo patterning in flowering plants.</title>
        <authorList>
            <person name="Costa L.M."/>
            <person name="Marshall E."/>
            <person name="Tesfaye M."/>
            <person name="Silverstein K.A."/>
            <person name="Mori M."/>
            <person name="Umetsu Y."/>
            <person name="Otterbach S.L."/>
            <person name="Papareddy R."/>
            <person name="Dickinson H.G."/>
            <person name="Boutiller K."/>
            <person name="VandenBosch K.A."/>
            <person name="Ohki S."/>
            <person name="Gutierrez-Marcos J.F."/>
        </authorList>
    </citation>
    <scope>IDENTIFICATION</scope>
    <scope>TISSUE SPECIFICITY</scope>
</reference>
<feature type="signal peptide" evidence="2">
    <location>
        <begin position="1"/>
        <end position="22"/>
    </location>
</feature>
<feature type="chain" id="PRO_0000430065" description="EMBRYO SURROUNDING FACTOR 1-like protein 4">
    <location>
        <begin position="23"/>
        <end position="74"/>
    </location>
</feature>
<feature type="disulfide bond" evidence="1">
    <location>
        <begin position="36"/>
        <end position="51"/>
    </location>
</feature>
<feature type="disulfide bond" evidence="1">
    <location>
        <begin position="41"/>
        <end position="70"/>
    </location>
</feature>
<feature type="disulfide bond" evidence="1">
    <location>
        <begin position="49"/>
        <end position="66"/>
    </location>
</feature>
<feature type="disulfide bond" evidence="1">
    <location>
        <begin position="52"/>
        <end position="59"/>
    </location>
</feature>